<evidence type="ECO:0000255" key="1">
    <source>
        <dbReference type="HAMAP-Rule" id="MF_01218"/>
    </source>
</evidence>
<evidence type="ECO:0000305" key="2"/>
<keyword id="KW-0021">Allosteric enzyme</keyword>
<keyword id="KW-0328">Glycosyltransferase</keyword>
<keyword id="KW-0342">GTP-binding</keyword>
<keyword id="KW-0460">Magnesium</keyword>
<keyword id="KW-0547">Nucleotide-binding</keyword>
<keyword id="KW-0808">Transferase</keyword>
<proteinExistence type="inferred from homology"/>
<accession>Q6FE58</accession>
<organism>
    <name type="scientific">Acinetobacter baylyi (strain ATCC 33305 / BD413 / ADP1)</name>
    <dbReference type="NCBI Taxonomy" id="62977"/>
    <lineage>
        <taxon>Bacteria</taxon>
        <taxon>Pseudomonadati</taxon>
        <taxon>Pseudomonadota</taxon>
        <taxon>Gammaproteobacteria</taxon>
        <taxon>Moraxellales</taxon>
        <taxon>Moraxellaceae</taxon>
        <taxon>Acinetobacter</taxon>
    </lineage>
</organism>
<feature type="chain" id="PRO_0000120789" description="Uracil phosphoribosyltransferase">
    <location>
        <begin position="1"/>
        <end position="211"/>
    </location>
</feature>
<feature type="binding site" evidence="1">
    <location>
        <position position="78"/>
    </location>
    <ligand>
        <name>5-phospho-alpha-D-ribose 1-diphosphate</name>
        <dbReference type="ChEBI" id="CHEBI:58017"/>
    </ligand>
</feature>
<feature type="binding site" evidence="1">
    <location>
        <position position="103"/>
    </location>
    <ligand>
        <name>5-phospho-alpha-D-ribose 1-diphosphate</name>
        <dbReference type="ChEBI" id="CHEBI:58017"/>
    </ligand>
</feature>
<feature type="binding site" evidence="1">
    <location>
        <begin position="130"/>
        <end position="138"/>
    </location>
    <ligand>
        <name>5-phospho-alpha-D-ribose 1-diphosphate</name>
        <dbReference type="ChEBI" id="CHEBI:58017"/>
    </ligand>
</feature>
<feature type="binding site" evidence="1">
    <location>
        <position position="193"/>
    </location>
    <ligand>
        <name>uracil</name>
        <dbReference type="ChEBI" id="CHEBI:17568"/>
    </ligand>
</feature>
<feature type="binding site" evidence="1">
    <location>
        <begin position="198"/>
        <end position="200"/>
    </location>
    <ligand>
        <name>uracil</name>
        <dbReference type="ChEBI" id="CHEBI:17568"/>
    </ligand>
</feature>
<feature type="binding site" evidence="1">
    <location>
        <position position="199"/>
    </location>
    <ligand>
        <name>5-phospho-alpha-D-ribose 1-diphosphate</name>
        <dbReference type="ChEBI" id="CHEBI:58017"/>
    </ligand>
</feature>
<comment type="function">
    <text evidence="1">Catalyzes the conversion of uracil and 5-phospho-alpha-D-ribose 1-diphosphate (PRPP) to UMP and diphosphate.</text>
</comment>
<comment type="catalytic activity">
    <reaction evidence="1">
        <text>UMP + diphosphate = 5-phospho-alpha-D-ribose 1-diphosphate + uracil</text>
        <dbReference type="Rhea" id="RHEA:13017"/>
        <dbReference type="ChEBI" id="CHEBI:17568"/>
        <dbReference type="ChEBI" id="CHEBI:33019"/>
        <dbReference type="ChEBI" id="CHEBI:57865"/>
        <dbReference type="ChEBI" id="CHEBI:58017"/>
        <dbReference type="EC" id="2.4.2.9"/>
    </reaction>
</comment>
<comment type="cofactor">
    <cofactor evidence="1">
        <name>Mg(2+)</name>
        <dbReference type="ChEBI" id="CHEBI:18420"/>
    </cofactor>
    <text evidence="1">Binds 1 Mg(2+) ion per subunit. The magnesium is bound as Mg-PRPP.</text>
</comment>
<comment type="activity regulation">
    <text evidence="1">Allosterically activated by GTP.</text>
</comment>
<comment type="pathway">
    <text evidence="1">Pyrimidine metabolism; UMP biosynthesis via salvage pathway; UMP from uracil: step 1/1.</text>
</comment>
<comment type="similarity">
    <text evidence="1">Belongs to the UPRTase family.</text>
</comment>
<comment type="sequence caution" evidence="2">
    <conflict type="erroneous initiation">
        <sequence resource="EMBL-CDS" id="CAG67650"/>
    </conflict>
</comment>
<dbReference type="EC" id="2.4.2.9" evidence="1"/>
<dbReference type="EMBL" id="CR543861">
    <property type="protein sequence ID" value="CAG67650.1"/>
    <property type="status" value="ALT_INIT"/>
    <property type="molecule type" value="Genomic_DNA"/>
</dbReference>
<dbReference type="RefSeq" id="WP_004922492.1">
    <property type="nucleotide sequence ID" value="NC_005966.1"/>
</dbReference>
<dbReference type="SMR" id="Q6FE58"/>
<dbReference type="STRING" id="202950.GCA_001485005_02500"/>
<dbReference type="GeneID" id="45233209"/>
<dbReference type="KEGG" id="aci:ACIAD0744"/>
<dbReference type="eggNOG" id="COG0035">
    <property type="taxonomic scope" value="Bacteria"/>
</dbReference>
<dbReference type="HOGENOM" id="CLU_067096_2_2_6"/>
<dbReference type="OrthoDB" id="9781675at2"/>
<dbReference type="BioCyc" id="ASP62977:ACIAD_RS03405-MONOMER"/>
<dbReference type="UniPathway" id="UPA00574">
    <property type="reaction ID" value="UER00636"/>
</dbReference>
<dbReference type="Proteomes" id="UP000000430">
    <property type="component" value="Chromosome"/>
</dbReference>
<dbReference type="GO" id="GO:0005525">
    <property type="term" value="F:GTP binding"/>
    <property type="evidence" value="ECO:0007669"/>
    <property type="project" value="UniProtKB-KW"/>
</dbReference>
<dbReference type="GO" id="GO:0000287">
    <property type="term" value="F:magnesium ion binding"/>
    <property type="evidence" value="ECO:0007669"/>
    <property type="project" value="UniProtKB-UniRule"/>
</dbReference>
<dbReference type="GO" id="GO:0004845">
    <property type="term" value="F:uracil phosphoribosyltransferase activity"/>
    <property type="evidence" value="ECO:0007669"/>
    <property type="project" value="UniProtKB-UniRule"/>
</dbReference>
<dbReference type="GO" id="GO:0044206">
    <property type="term" value="P:UMP salvage"/>
    <property type="evidence" value="ECO:0007669"/>
    <property type="project" value="UniProtKB-UniRule"/>
</dbReference>
<dbReference type="GO" id="GO:0006223">
    <property type="term" value="P:uracil salvage"/>
    <property type="evidence" value="ECO:0007669"/>
    <property type="project" value="InterPro"/>
</dbReference>
<dbReference type="CDD" id="cd06223">
    <property type="entry name" value="PRTases_typeI"/>
    <property type="match status" value="1"/>
</dbReference>
<dbReference type="FunFam" id="3.40.50.2020:FF:000003">
    <property type="entry name" value="Uracil phosphoribosyltransferase"/>
    <property type="match status" value="1"/>
</dbReference>
<dbReference type="Gene3D" id="3.40.50.2020">
    <property type="match status" value="1"/>
</dbReference>
<dbReference type="HAMAP" id="MF_01218_B">
    <property type="entry name" value="Upp_B"/>
    <property type="match status" value="1"/>
</dbReference>
<dbReference type="InterPro" id="IPR000836">
    <property type="entry name" value="PRibTrfase_dom"/>
</dbReference>
<dbReference type="InterPro" id="IPR029057">
    <property type="entry name" value="PRTase-like"/>
</dbReference>
<dbReference type="InterPro" id="IPR034332">
    <property type="entry name" value="Upp_B"/>
</dbReference>
<dbReference type="InterPro" id="IPR050054">
    <property type="entry name" value="UPRTase/APRTase"/>
</dbReference>
<dbReference type="InterPro" id="IPR005765">
    <property type="entry name" value="Ura_phspho_trans"/>
</dbReference>
<dbReference type="NCBIfam" id="NF001097">
    <property type="entry name" value="PRK00129.1"/>
    <property type="match status" value="1"/>
</dbReference>
<dbReference type="NCBIfam" id="TIGR01091">
    <property type="entry name" value="upp"/>
    <property type="match status" value="1"/>
</dbReference>
<dbReference type="PANTHER" id="PTHR32315">
    <property type="entry name" value="ADENINE PHOSPHORIBOSYLTRANSFERASE"/>
    <property type="match status" value="1"/>
</dbReference>
<dbReference type="PANTHER" id="PTHR32315:SF4">
    <property type="entry name" value="URACIL PHOSPHORIBOSYLTRANSFERASE, CHLOROPLASTIC"/>
    <property type="match status" value="1"/>
</dbReference>
<dbReference type="Pfam" id="PF14681">
    <property type="entry name" value="UPRTase"/>
    <property type="match status" value="1"/>
</dbReference>
<dbReference type="SUPFAM" id="SSF53271">
    <property type="entry name" value="PRTase-like"/>
    <property type="match status" value="1"/>
</dbReference>
<sequence length="211" mass="23139">MPIQEIRHPLIRHKLGLLRRAEISTKNFRELAQEVTMLLTYEATKDLQLVDHEIDGWVGKVKTQRIAGKKITIVPILRAGIGMLEGVLNLIPSAKVSVLGLERDEETLEARTYYKKLVPDVANRIAMIIDPMLATGSSLIAAIDVLKASGCKDIRVMVLVAAPEGVKKVQAKHPEVEIYTASIDDGLNEHGYIVPGLGDAGDKIFGSVQKD</sequence>
<protein>
    <recommendedName>
        <fullName evidence="1">Uracil phosphoribosyltransferase</fullName>
        <ecNumber evidence="1">2.4.2.9</ecNumber>
    </recommendedName>
    <alternativeName>
        <fullName evidence="1">UMP pyrophosphorylase</fullName>
    </alternativeName>
    <alternativeName>
        <fullName evidence="1">UPRTase</fullName>
    </alternativeName>
</protein>
<reference key="1">
    <citation type="journal article" date="2004" name="Nucleic Acids Res.">
        <title>Unique features revealed by the genome sequence of Acinetobacter sp. ADP1, a versatile and naturally transformation competent bacterium.</title>
        <authorList>
            <person name="Barbe V."/>
            <person name="Vallenet D."/>
            <person name="Fonknechten N."/>
            <person name="Kreimeyer A."/>
            <person name="Oztas S."/>
            <person name="Labarre L."/>
            <person name="Cruveiller S."/>
            <person name="Robert C."/>
            <person name="Duprat S."/>
            <person name="Wincker P."/>
            <person name="Ornston L.N."/>
            <person name="Weissenbach J."/>
            <person name="Marliere P."/>
            <person name="Cohen G.N."/>
            <person name="Medigue C."/>
        </authorList>
    </citation>
    <scope>NUCLEOTIDE SEQUENCE [LARGE SCALE GENOMIC DNA]</scope>
    <source>
        <strain>ATCC 33305 / BD413 / ADP1</strain>
    </source>
</reference>
<name>UPP_ACIAD</name>
<gene>
    <name evidence="1" type="primary">upp</name>
    <name type="ordered locus">ACIAD0744</name>
</gene>